<protein>
    <recommendedName>
        <fullName evidence="1">Neurite extension and migration factor</fullName>
    </recommendedName>
    <alternativeName>
        <fullName evidence="6">KIAA2022 protein associated with intellectual disability, language impairment and autistic behavior homolog</fullName>
        <shortName evidence="6">KIDLIA</shortName>
    </alternativeName>
</protein>
<name>NEXMI_MOUSE</name>
<evidence type="ECO:0000250" key="1">
    <source>
        <dbReference type="UniProtKB" id="Q5QGS0"/>
    </source>
</evidence>
<evidence type="ECO:0000256" key="2">
    <source>
        <dbReference type="SAM" id="MobiDB-lite"/>
    </source>
</evidence>
<evidence type="ECO:0000269" key="3">
    <source>
    </source>
</evidence>
<evidence type="ECO:0000269" key="4">
    <source>
    </source>
</evidence>
<evidence type="ECO:0000269" key="5">
    <source>
    </source>
</evidence>
<evidence type="ECO:0000303" key="6">
    <source>
    </source>
</evidence>
<evidence type="ECO:0000303" key="7">
    <source ref="2"/>
</evidence>
<evidence type="ECO:0000305" key="8"/>
<feature type="chain" id="PRO_0000257845" description="Neurite extension and migration factor">
    <location>
        <begin position="1"/>
        <end position="1515"/>
    </location>
</feature>
<feature type="region of interest" description="Disordered" evidence="2">
    <location>
        <begin position="381"/>
        <end position="415"/>
    </location>
</feature>
<feature type="region of interest" description="Disordered" evidence="2">
    <location>
        <begin position="505"/>
        <end position="529"/>
    </location>
</feature>
<feature type="region of interest" description="Disordered" evidence="2">
    <location>
        <begin position="731"/>
        <end position="774"/>
    </location>
</feature>
<feature type="region of interest" description="Disordered" evidence="2">
    <location>
        <begin position="1158"/>
        <end position="1225"/>
    </location>
</feature>
<feature type="region of interest" description="Disordered" evidence="2">
    <location>
        <begin position="1372"/>
        <end position="1422"/>
    </location>
</feature>
<feature type="region of interest" description="Disordered" evidence="2">
    <location>
        <begin position="1435"/>
        <end position="1479"/>
    </location>
</feature>
<feature type="compositionally biased region" description="Basic and acidic residues" evidence="2">
    <location>
        <begin position="381"/>
        <end position="405"/>
    </location>
</feature>
<feature type="compositionally biased region" description="Polar residues" evidence="2">
    <location>
        <begin position="746"/>
        <end position="757"/>
    </location>
</feature>
<feature type="compositionally biased region" description="Polar residues" evidence="2">
    <location>
        <begin position="763"/>
        <end position="772"/>
    </location>
</feature>
<feature type="compositionally biased region" description="Low complexity" evidence="2">
    <location>
        <begin position="1180"/>
        <end position="1193"/>
    </location>
</feature>
<feature type="compositionally biased region" description="Basic residues" evidence="2">
    <location>
        <begin position="1442"/>
        <end position="1452"/>
    </location>
</feature>
<feature type="compositionally biased region" description="Basic and acidic residues" evidence="2">
    <location>
        <begin position="1455"/>
        <end position="1479"/>
    </location>
</feature>
<feature type="splice variant" id="VSP_021372" description="In isoform 2." evidence="7">
    <location>
        <begin position="1486"/>
        <end position="1515"/>
    </location>
</feature>
<feature type="sequence conflict" description="In Ref. 2; BAD90269." evidence="8" ref="2">
    <original>Y</original>
    <variation>H</variation>
    <location>
        <position position="451"/>
    </location>
</feature>
<dbReference type="EMBL" id="DQ975302">
    <property type="protein sequence ID" value="ABI97947.1"/>
    <property type="molecule type" value="mRNA"/>
</dbReference>
<dbReference type="EMBL" id="AK220439">
    <property type="protein sequence ID" value="BAD90269.1"/>
    <property type="status" value="ALT_INIT"/>
    <property type="molecule type" value="mRNA"/>
</dbReference>
<dbReference type="EMBL" id="AL671963">
    <property type="status" value="NOT_ANNOTATED_CDS"/>
    <property type="molecule type" value="Genomic_DNA"/>
</dbReference>
<dbReference type="EMBL" id="AK038635">
    <property type="protein sequence ID" value="BAC30074.1"/>
    <property type="molecule type" value="mRNA"/>
</dbReference>
<dbReference type="EMBL" id="AK054513">
    <property type="protein sequence ID" value="BAC35808.1"/>
    <property type="molecule type" value="mRNA"/>
</dbReference>
<dbReference type="CCDS" id="CCDS53166.1">
    <molecule id="Q5DTT1-1"/>
</dbReference>
<dbReference type="RefSeq" id="NP_001070822.2">
    <molecule id="Q5DTT1-1"/>
    <property type="nucleotide sequence ID" value="NM_001077354.3"/>
</dbReference>
<dbReference type="RefSeq" id="XP_006528094.1">
    <molecule id="Q5DTT1-1"/>
    <property type="nucleotide sequence ID" value="XM_006528031.5"/>
</dbReference>
<dbReference type="RefSeq" id="XP_006528097.1">
    <molecule id="Q5DTT1-1"/>
    <property type="nucleotide sequence ID" value="XM_006528034.5"/>
</dbReference>
<dbReference type="RefSeq" id="XP_030107199.1">
    <molecule id="Q5DTT1-1"/>
    <property type="nucleotide sequence ID" value="XM_030251339.2"/>
</dbReference>
<dbReference type="RefSeq" id="XP_030107200.1">
    <molecule id="Q5DTT1-1"/>
    <property type="nucleotide sequence ID" value="XM_030251340.2"/>
</dbReference>
<dbReference type="BioGRID" id="232796">
    <property type="interactions" value="1"/>
</dbReference>
<dbReference type="FunCoup" id="Q5DTT1">
    <property type="interactions" value="1357"/>
</dbReference>
<dbReference type="STRING" id="10090.ENSMUSP00000085187"/>
<dbReference type="GlyGen" id="Q5DTT1">
    <property type="glycosylation" value="1 site, 1 O-linked glycan (1 site)"/>
</dbReference>
<dbReference type="iPTMnet" id="Q5DTT1"/>
<dbReference type="PhosphoSitePlus" id="Q5DTT1"/>
<dbReference type="jPOST" id="Q5DTT1"/>
<dbReference type="PaxDb" id="10090-ENSMUSP00000085187"/>
<dbReference type="ProteomicsDB" id="287485">
    <molecule id="Q5DTT1-1"/>
</dbReference>
<dbReference type="ProteomicsDB" id="287486">
    <molecule id="Q5DTT1-2"/>
</dbReference>
<dbReference type="Antibodypedia" id="405">
    <property type="antibodies" value="9 antibodies from 7 providers"/>
</dbReference>
<dbReference type="Ensembl" id="ENSMUST00000056502.7">
    <molecule id="Q5DTT1-2"/>
    <property type="protein sequence ID" value="ENSMUSP00000049716.7"/>
    <property type="gene ID" value="ENSMUSG00000046449.16"/>
</dbReference>
<dbReference type="Ensembl" id="ENSMUST00000087879.11">
    <molecule id="Q5DTT1-1"/>
    <property type="protein sequence ID" value="ENSMUSP00000085187.5"/>
    <property type="gene ID" value="ENSMUSG00000046449.16"/>
</dbReference>
<dbReference type="Ensembl" id="ENSMUST00000118314.8">
    <molecule id="Q5DTT1-2"/>
    <property type="protein sequence ID" value="ENSMUSP00000113625.2"/>
    <property type="gene ID" value="ENSMUSG00000046449.16"/>
</dbReference>
<dbReference type="GeneID" id="245555"/>
<dbReference type="KEGG" id="mmu:245555"/>
<dbReference type="UCSC" id="uc009uab.3">
    <molecule id="Q5DTT1-1"/>
    <property type="organism name" value="mouse"/>
</dbReference>
<dbReference type="AGR" id="MGI:2148050"/>
<dbReference type="CTD" id="340533"/>
<dbReference type="MGI" id="MGI:2148050">
    <property type="gene designation" value="Nexmif"/>
</dbReference>
<dbReference type="VEuPathDB" id="HostDB:ENSMUSG00000046449"/>
<dbReference type="eggNOG" id="ENOG502QUMY">
    <property type="taxonomic scope" value="Eukaryota"/>
</dbReference>
<dbReference type="GeneTree" id="ENSGT00940000159746"/>
<dbReference type="HOGENOM" id="CLU_250004_0_0_1"/>
<dbReference type="InParanoid" id="Q5DTT1"/>
<dbReference type="OMA" id="ETHIFQK"/>
<dbReference type="OrthoDB" id="9878678at2759"/>
<dbReference type="PhylomeDB" id="Q5DTT1"/>
<dbReference type="TreeFam" id="TF332248"/>
<dbReference type="BioGRID-ORCS" id="245555">
    <property type="hits" value="0 hits in 78 CRISPR screens"/>
</dbReference>
<dbReference type="ChiTaRS" id="Nexmif">
    <property type="organism name" value="mouse"/>
</dbReference>
<dbReference type="PRO" id="PR:Q5DTT1"/>
<dbReference type="Proteomes" id="UP000000589">
    <property type="component" value="Chromosome X"/>
</dbReference>
<dbReference type="RNAct" id="Q5DTT1">
    <property type="molecule type" value="protein"/>
</dbReference>
<dbReference type="Bgee" id="ENSMUSG00000046449">
    <property type="expression patterns" value="Expressed in anterior amygdaloid area and 170 other cell types or tissues"/>
</dbReference>
<dbReference type="ExpressionAtlas" id="Q5DTT1">
    <property type="expression patterns" value="baseline and differential"/>
</dbReference>
<dbReference type="GO" id="GO:0005829">
    <property type="term" value="C:cytosol"/>
    <property type="evidence" value="ECO:0007669"/>
    <property type="project" value="Ensembl"/>
</dbReference>
<dbReference type="GO" id="GO:0030496">
    <property type="term" value="C:midbody"/>
    <property type="evidence" value="ECO:0007669"/>
    <property type="project" value="Ensembl"/>
</dbReference>
<dbReference type="GO" id="GO:0005654">
    <property type="term" value="C:nucleoplasm"/>
    <property type="evidence" value="ECO:0007669"/>
    <property type="project" value="Ensembl"/>
</dbReference>
<dbReference type="GO" id="GO:0033629">
    <property type="term" value="P:negative regulation of cell adhesion mediated by integrin"/>
    <property type="evidence" value="ECO:0007669"/>
    <property type="project" value="Ensembl"/>
</dbReference>
<dbReference type="GO" id="GO:2000048">
    <property type="term" value="P:negative regulation of cell-cell adhesion mediated by cadherin"/>
    <property type="evidence" value="ECO:0007669"/>
    <property type="project" value="Ensembl"/>
</dbReference>
<dbReference type="GO" id="GO:0001953">
    <property type="term" value="P:negative regulation of cell-matrix adhesion"/>
    <property type="evidence" value="ECO:0007669"/>
    <property type="project" value="Ensembl"/>
</dbReference>
<dbReference type="GO" id="GO:2001223">
    <property type="term" value="P:negative regulation of neuron migration"/>
    <property type="evidence" value="ECO:0007669"/>
    <property type="project" value="Ensembl"/>
</dbReference>
<dbReference type="GO" id="GO:0007399">
    <property type="term" value="P:nervous system development"/>
    <property type="evidence" value="ECO:0007669"/>
    <property type="project" value="UniProtKB-KW"/>
</dbReference>
<dbReference type="InterPro" id="IPR032757">
    <property type="entry name" value="DUF4683"/>
</dbReference>
<dbReference type="InterPro" id="IPR042794">
    <property type="entry name" value="Nexmif"/>
</dbReference>
<dbReference type="PANTHER" id="PTHR46946">
    <property type="entry name" value="NEURITE EXTENSION AND MIGRATION FACTOR"/>
    <property type="match status" value="1"/>
</dbReference>
<dbReference type="PANTHER" id="PTHR46946:SF1">
    <property type="entry name" value="NEURITE EXTENSION AND MIGRATION FACTOR"/>
    <property type="match status" value="1"/>
</dbReference>
<dbReference type="Pfam" id="PF15735">
    <property type="entry name" value="DUF4683"/>
    <property type="match status" value="1"/>
</dbReference>
<comment type="function">
    <text evidence="5">Involved in neurite outgrowth by regulating cell-cell adhesion via the N-cadherin signaling pathway. May act by regulating expression of protein-coding genes, such as N-cadherins and integrin beta-1 (ITGB1).</text>
</comment>
<comment type="subcellular location">
    <subcellularLocation>
        <location evidence="4 5">Nucleus</location>
    </subcellularLocation>
    <subcellularLocation>
        <location evidence="4">Cytoplasm</location>
    </subcellularLocation>
</comment>
<comment type="alternative products">
    <event type="alternative splicing"/>
    <isoform>
        <id>Q5DTT1-1</id>
        <name>1</name>
        <sequence type="displayed"/>
    </isoform>
    <isoform>
        <id>Q5DTT1-2</id>
        <name>2</name>
        <sequence type="described" ref="VSP_021372"/>
    </isoform>
</comment>
<comment type="tissue specificity">
    <text evidence="4 5">Expressed in the brain, particularly during the late embryonic and perinatal stages of development (PubMed:22531377). In the developing brain, it is expressed only in the cortical plate and subplate region but not in the intermediate or ventricular zone (PubMed:27822498).</text>
</comment>
<comment type="developmental stage">
    <text evidence="3">Widely expressed in brain by postmitotic neurons from early development through early adulthood.</text>
</comment>
<comment type="sequence caution" evidence="8">
    <conflict type="erroneous initiation">
        <sequence resource="EMBL-CDS" id="BAD90269"/>
    </conflict>
    <text>Extended N-terminus.</text>
</comment>
<organism>
    <name type="scientific">Mus musculus</name>
    <name type="common">Mouse</name>
    <dbReference type="NCBI Taxonomy" id="10090"/>
    <lineage>
        <taxon>Eukaryota</taxon>
        <taxon>Metazoa</taxon>
        <taxon>Chordata</taxon>
        <taxon>Craniata</taxon>
        <taxon>Vertebrata</taxon>
        <taxon>Euteleostomi</taxon>
        <taxon>Mammalia</taxon>
        <taxon>Eutheria</taxon>
        <taxon>Euarchontoglires</taxon>
        <taxon>Glires</taxon>
        <taxon>Rodentia</taxon>
        <taxon>Myomorpha</taxon>
        <taxon>Muroidea</taxon>
        <taxon>Muridae</taxon>
        <taxon>Murinae</taxon>
        <taxon>Mus</taxon>
        <taxon>Mus</taxon>
    </lineage>
</organism>
<gene>
    <name evidence="1" type="primary">Nexmif</name>
    <name evidence="7" type="synonym">Kiaa2022</name>
</gene>
<accession>Q5DTT1</accession>
<accession>Q003Y8</accession>
<accession>Q8BW26</accession>
<accession>Q8BYR0</accession>
<proteinExistence type="evidence at transcript level"/>
<sequence>MDNQQDKVIAASANGDNNLINGVKNNDSEDQEVAMKSFVALEATTPIQPIPVIQKESPMFPRGLLPPPSKKPCMQSPPSPLALIEAPDHSANSASVNAISLTSGVAKGLNTWSLPNECEKAPFAIMEPAGMSALNGDCLMQPSRTCLGCFMESKEAVDPEPGISLKVSDLNRDYETCAVSDIGIQCINAGENIKYGEQLLSDQLLGFPLHKSRAGDRRESEKPDIDLEDPTQKSYYEALLLDKCNTEEALLANSNQDWGYFETFISESKIELLDLCSKNELSVNLFSEEDVENYMFDDDESTLGSDVCSLKIRYESFQDNVRDKTTLLMQEDAQFNFFPSVFTTCPKRESKSGILKQSSDLSQFKVPDVSIIWGEEDKNLDKKKGKEEVHEDKSIETKDEKDNGEKPALNNKPCGGLEVEQFKNLKADQLTNSLETSGNFSDDSSFIEVSYDAMGEIKDCSRYMARDTNSGSSSSQQNYGLRAKRKVRYSEDYLYDVDSLEGEKVNERKEWPPGGSKEEDDDEWCPKKRRKVTRKEPPVIIKYIIINRFKGEKNMLVKLSKVDASETTVNLSENQLSKYAKLSPLKGFWQKKKKQKNSNTDSVKTPLCQKQSFEPGSFEVSFLPPARKRKSKLGNRHRIQRIQSVETSASSKQVSFCSDQKQACNRKEDGVKGTPKSALLTDPSCANGSHLRGLIVSDSVKVKAQDTEFKGPERKVLNKIKFKSEARLKSKKIKAGQENKPVVQMSPVSEDTSSKANLKNEVTPGTSNSSHMSEFHETKVKNSTFLPTTCSSEMPLSSANVATNIPVIPGGYLQTLLDASDLSNNTSISYFTNHSAEQNEGSLTQTEKAFVPLQSAQDCVLSSSSDSQLQQSSQNFKMEASNFGSLWPDKDTSGSQEFMTEVSREIATNQSSEFEASQVVSMENNLTAITYSPVCLNSDASGCNKVLYASLQDSHLPPEDLYQLCHFNNGEICFPFQQGPLSTDDDGRLFSFDSMTSLTVSSSNYCSLSLKSCEKDGDDEINDDFLAHCSPKLVIQQSIDEIAPLKESTDLLDISNFTPDKFRHSSLLEMSPPDTPSLSPQSTRCESIKTLGTMKGFQEGVPGSLSTVEKIKWDCNTLSQQAQADDGFTLNSHQFQFHMFNDEDSVGLLQKSPCLSTFDEPAGQINTNSKVSKSRKKTSPGKSGAVSQSSSQKNSRKKSPKASNKGVEKPPSKTSRQVPKSTKKGKYVAAVNGEKMQIGIGHSGGQPNSTSSNAKTLTECIQHGGPVASMKIPSQKGLSGDWALGKESRPGWNDMSVVTNTNNLLDDDQREFQEPSYILSNIASGMADVQRFMMASMEPLWEPMEHQGESNTFYSPDSNSLKLKTLKILAGTPQESKKKVTNGSSGATKNHRSVKAVSKSNGKAAIGEPGHADMPGSSEDSRSAFFDKKYSNVNTLGNNGPTHKKLYRHKSSSKGLRDEKYKGKRVEREQAHKDEAGTTSFEKLRDSNYNLLKAETAFGVLPVFEEETHIFQKDI</sequence>
<reference key="1">
    <citation type="journal article" date="2009" name="Gene Expr. Patterns">
        <title>Spatiotemporal expression in mouse brain of Kiaa2022, a gene disrupted in two patients with severe mental retardation.</title>
        <authorList>
            <person name="Cantagrel V."/>
            <person name="Haddad M.R."/>
            <person name="Ciofi P."/>
            <person name="Andrieu D."/>
            <person name="Lossi A.M."/>
            <person name="Maldergem L."/>
            <person name="Roux J.C."/>
            <person name="Villard L."/>
        </authorList>
    </citation>
    <scope>NUCLEOTIDE SEQUENCE [MRNA] (ISOFORM 1)</scope>
    <scope>DEVELOPMENTAL STAGE</scope>
    <source>
        <strain>SWR/J</strain>
        <tissue>Embryo</tissue>
    </source>
</reference>
<reference key="2">
    <citation type="submission" date="2005-02" db="EMBL/GenBank/DDBJ databases">
        <title>Prediction of the coding sequences of mouse homologues of KIAA gene. The complete nucleotide sequences of mouse KIAA-homologous cDNAs identified by screening of terminal sequences of cDNA clones randomly sampled from size-fractionated libraries.</title>
        <authorList>
            <person name="Okazaki N."/>
            <person name="Kikuno R.F."/>
            <person name="Ohara R."/>
            <person name="Inamoto S."/>
            <person name="Nagase T."/>
            <person name="Ohara O."/>
            <person name="Koga H."/>
        </authorList>
    </citation>
    <scope>NUCLEOTIDE SEQUENCE [LARGE SCALE MRNA] (ISOFORM 2)</scope>
</reference>
<reference key="3">
    <citation type="journal article" date="2009" name="PLoS Biol.">
        <title>Lineage-specific biology revealed by a finished genome assembly of the mouse.</title>
        <authorList>
            <person name="Church D.M."/>
            <person name="Goodstadt L."/>
            <person name="Hillier L.W."/>
            <person name="Zody M.C."/>
            <person name="Goldstein S."/>
            <person name="She X."/>
            <person name="Bult C.J."/>
            <person name="Agarwala R."/>
            <person name="Cherry J.L."/>
            <person name="DiCuccio M."/>
            <person name="Hlavina W."/>
            <person name="Kapustin Y."/>
            <person name="Meric P."/>
            <person name="Maglott D."/>
            <person name="Birtle Z."/>
            <person name="Marques A.C."/>
            <person name="Graves T."/>
            <person name="Zhou S."/>
            <person name="Teague B."/>
            <person name="Potamousis K."/>
            <person name="Churas C."/>
            <person name="Place M."/>
            <person name="Herschleb J."/>
            <person name="Runnheim R."/>
            <person name="Forrest D."/>
            <person name="Amos-Landgraf J."/>
            <person name="Schwartz D.C."/>
            <person name="Cheng Z."/>
            <person name="Lindblad-Toh K."/>
            <person name="Eichler E.E."/>
            <person name="Ponting C.P."/>
        </authorList>
    </citation>
    <scope>NUCLEOTIDE SEQUENCE [LARGE SCALE GENOMIC DNA]</scope>
    <source>
        <strain>C57BL/6J</strain>
    </source>
</reference>
<reference key="4">
    <citation type="journal article" date="2005" name="Science">
        <title>The transcriptional landscape of the mammalian genome.</title>
        <authorList>
            <person name="Carninci P."/>
            <person name="Kasukawa T."/>
            <person name="Katayama S."/>
            <person name="Gough J."/>
            <person name="Frith M.C."/>
            <person name="Maeda N."/>
            <person name="Oyama R."/>
            <person name="Ravasi T."/>
            <person name="Lenhard B."/>
            <person name="Wells C."/>
            <person name="Kodzius R."/>
            <person name="Shimokawa K."/>
            <person name="Bajic V.B."/>
            <person name="Brenner S.E."/>
            <person name="Batalov S."/>
            <person name="Forrest A.R."/>
            <person name="Zavolan M."/>
            <person name="Davis M.J."/>
            <person name="Wilming L.G."/>
            <person name="Aidinis V."/>
            <person name="Allen J.E."/>
            <person name="Ambesi-Impiombato A."/>
            <person name="Apweiler R."/>
            <person name="Aturaliya R.N."/>
            <person name="Bailey T.L."/>
            <person name="Bansal M."/>
            <person name="Baxter L."/>
            <person name="Beisel K.W."/>
            <person name="Bersano T."/>
            <person name="Bono H."/>
            <person name="Chalk A.M."/>
            <person name="Chiu K.P."/>
            <person name="Choudhary V."/>
            <person name="Christoffels A."/>
            <person name="Clutterbuck D.R."/>
            <person name="Crowe M.L."/>
            <person name="Dalla E."/>
            <person name="Dalrymple B.P."/>
            <person name="de Bono B."/>
            <person name="Della Gatta G."/>
            <person name="di Bernardo D."/>
            <person name="Down T."/>
            <person name="Engstrom P."/>
            <person name="Fagiolini M."/>
            <person name="Faulkner G."/>
            <person name="Fletcher C.F."/>
            <person name="Fukushima T."/>
            <person name="Furuno M."/>
            <person name="Futaki S."/>
            <person name="Gariboldi M."/>
            <person name="Georgii-Hemming P."/>
            <person name="Gingeras T.R."/>
            <person name="Gojobori T."/>
            <person name="Green R.E."/>
            <person name="Gustincich S."/>
            <person name="Harbers M."/>
            <person name="Hayashi Y."/>
            <person name="Hensch T.K."/>
            <person name="Hirokawa N."/>
            <person name="Hill D."/>
            <person name="Huminiecki L."/>
            <person name="Iacono M."/>
            <person name="Ikeo K."/>
            <person name="Iwama A."/>
            <person name="Ishikawa T."/>
            <person name="Jakt M."/>
            <person name="Kanapin A."/>
            <person name="Katoh M."/>
            <person name="Kawasawa Y."/>
            <person name="Kelso J."/>
            <person name="Kitamura H."/>
            <person name="Kitano H."/>
            <person name="Kollias G."/>
            <person name="Krishnan S.P."/>
            <person name="Kruger A."/>
            <person name="Kummerfeld S.K."/>
            <person name="Kurochkin I.V."/>
            <person name="Lareau L.F."/>
            <person name="Lazarevic D."/>
            <person name="Lipovich L."/>
            <person name="Liu J."/>
            <person name="Liuni S."/>
            <person name="McWilliam S."/>
            <person name="Madan Babu M."/>
            <person name="Madera M."/>
            <person name="Marchionni L."/>
            <person name="Matsuda H."/>
            <person name="Matsuzawa S."/>
            <person name="Miki H."/>
            <person name="Mignone F."/>
            <person name="Miyake S."/>
            <person name="Morris K."/>
            <person name="Mottagui-Tabar S."/>
            <person name="Mulder N."/>
            <person name="Nakano N."/>
            <person name="Nakauchi H."/>
            <person name="Ng P."/>
            <person name="Nilsson R."/>
            <person name="Nishiguchi S."/>
            <person name="Nishikawa S."/>
            <person name="Nori F."/>
            <person name="Ohara O."/>
            <person name="Okazaki Y."/>
            <person name="Orlando V."/>
            <person name="Pang K.C."/>
            <person name="Pavan W.J."/>
            <person name="Pavesi G."/>
            <person name="Pesole G."/>
            <person name="Petrovsky N."/>
            <person name="Piazza S."/>
            <person name="Reed J."/>
            <person name="Reid J.F."/>
            <person name="Ring B.Z."/>
            <person name="Ringwald M."/>
            <person name="Rost B."/>
            <person name="Ruan Y."/>
            <person name="Salzberg S.L."/>
            <person name="Sandelin A."/>
            <person name="Schneider C."/>
            <person name="Schoenbach C."/>
            <person name="Sekiguchi K."/>
            <person name="Semple C.A."/>
            <person name="Seno S."/>
            <person name="Sessa L."/>
            <person name="Sheng Y."/>
            <person name="Shibata Y."/>
            <person name="Shimada H."/>
            <person name="Shimada K."/>
            <person name="Silva D."/>
            <person name="Sinclair B."/>
            <person name="Sperling S."/>
            <person name="Stupka E."/>
            <person name="Sugiura K."/>
            <person name="Sultana R."/>
            <person name="Takenaka Y."/>
            <person name="Taki K."/>
            <person name="Tammoja K."/>
            <person name="Tan S.L."/>
            <person name="Tang S."/>
            <person name="Taylor M.S."/>
            <person name="Tegner J."/>
            <person name="Teichmann S.A."/>
            <person name="Ueda H.R."/>
            <person name="van Nimwegen E."/>
            <person name="Verardo R."/>
            <person name="Wei C.L."/>
            <person name="Yagi K."/>
            <person name="Yamanishi H."/>
            <person name="Zabarovsky E."/>
            <person name="Zhu S."/>
            <person name="Zimmer A."/>
            <person name="Hide W."/>
            <person name="Bult C."/>
            <person name="Grimmond S.M."/>
            <person name="Teasdale R.D."/>
            <person name="Liu E.T."/>
            <person name="Brusic V."/>
            <person name="Quackenbush J."/>
            <person name="Wahlestedt C."/>
            <person name="Mattick J.S."/>
            <person name="Hume D.A."/>
            <person name="Kai C."/>
            <person name="Sasaki D."/>
            <person name="Tomaru Y."/>
            <person name="Fukuda S."/>
            <person name="Kanamori-Katayama M."/>
            <person name="Suzuki M."/>
            <person name="Aoki J."/>
            <person name="Arakawa T."/>
            <person name="Iida J."/>
            <person name="Imamura K."/>
            <person name="Itoh M."/>
            <person name="Kato T."/>
            <person name="Kawaji H."/>
            <person name="Kawagashira N."/>
            <person name="Kawashima T."/>
            <person name="Kojima M."/>
            <person name="Kondo S."/>
            <person name="Konno H."/>
            <person name="Nakano K."/>
            <person name="Ninomiya N."/>
            <person name="Nishio T."/>
            <person name="Okada M."/>
            <person name="Plessy C."/>
            <person name="Shibata K."/>
            <person name="Shiraki T."/>
            <person name="Suzuki S."/>
            <person name="Tagami M."/>
            <person name="Waki K."/>
            <person name="Watahiki A."/>
            <person name="Okamura-Oho Y."/>
            <person name="Suzuki H."/>
            <person name="Kawai J."/>
            <person name="Hayashizaki Y."/>
        </authorList>
    </citation>
    <scope>NUCLEOTIDE SEQUENCE [LARGE SCALE MRNA] OF 1-730</scope>
    <source>
        <strain>C57BL/6J</strain>
        <tissue>Hypothalamus</tissue>
        <tissue>Ovary</tissue>
    </source>
</reference>
<reference key="5">
    <citation type="journal article" date="2012" name="Neuroscience">
        <title>Transient expression of Xpn, an XLMR protein related to neurite extension, during brain development and participation in neurite outgrowth.</title>
        <authorList>
            <person name="Ishikawa T."/>
            <person name="Miyata S."/>
            <person name="Koyama Y."/>
            <person name="Yoshikawa K."/>
            <person name="Hattori T."/>
            <person name="Kumamoto N."/>
            <person name="Shingaki K."/>
            <person name="Katayama T."/>
            <person name="Tohyama M."/>
        </authorList>
    </citation>
    <scope>TISSUE SPECIFICITY</scope>
    <scope>SUBCELLULAR LOCATION</scope>
</reference>
<reference key="6">
    <citation type="journal article" date="2016" name="ENeuro">
        <title>The X-linked autism protein KIAA2022/KIDLIA regulates neurite outgrowth via N-cadherin and delta-catenin signaling.</title>
        <authorList>
            <person name="Gilbert J."/>
            <person name="Man H.Y."/>
        </authorList>
    </citation>
    <scope>FUNCTION</scope>
    <scope>SUBCELLULAR LOCATION</scope>
    <scope>TISSUE SPECIFICITY</scope>
</reference>
<keyword id="KW-0025">Alternative splicing</keyword>
<keyword id="KW-0963">Cytoplasm</keyword>
<keyword id="KW-0217">Developmental protein</keyword>
<keyword id="KW-0524">Neurogenesis</keyword>
<keyword id="KW-0539">Nucleus</keyword>
<keyword id="KW-1185">Reference proteome</keyword>
<keyword id="KW-0804">Transcription</keyword>
<keyword id="KW-0805">Transcription regulation</keyword>